<accession>Q9KV35</accession>
<dbReference type="EMBL" id="AE003852">
    <property type="protein sequence ID" value="AAF93496.1"/>
    <property type="molecule type" value="Genomic_DNA"/>
</dbReference>
<dbReference type="PIR" id="A82338">
    <property type="entry name" value="A82338"/>
</dbReference>
<dbReference type="RefSeq" id="NP_229977.1">
    <property type="nucleotide sequence ID" value="NC_002505.1"/>
</dbReference>
<dbReference type="RefSeq" id="WP_001287510.1">
    <property type="nucleotide sequence ID" value="NZ_LT906614.1"/>
</dbReference>
<dbReference type="SMR" id="Q9KV35"/>
<dbReference type="STRING" id="243277.VC_0323"/>
<dbReference type="DNASU" id="2615089"/>
<dbReference type="EnsemblBacteria" id="AAF93496">
    <property type="protein sequence ID" value="AAF93496"/>
    <property type="gene ID" value="VC_0323"/>
</dbReference>
<dbReference type="GeneID" id="94014905"/>
<dbReference type="KEGG" id="vch:VC_0323"/>
<dbReference type="PATRIC" id="fig|243277.26.peg.300"/>
<dbReference type="eggNOG" id="COG0250">
    <property type="taxonomic scope" value="Bacteria"/>
</dbReference>
<dbReference type="HOGENOM" id="CLU_067287_1_0_6"/>
<dbReference type="Proteomes" id="UP000000584">
    <property type="component" value="Chromosome 1"/>
</dbReference>
<dbReference type="GO" id="GO:0005829">
    <property type="term" value="C:cytosol"/>
    <property type="evidence" value="ECO:0000318"/>
    <property type="project" value="GO_Central"/>
</dbReference>
<dbReference type="GO" id="GO:0006353">
    <property type="term" value="P:DNA-templated transcription termination"/>
    <property type="evidence" value="ECO:0007669"/>
    <property type="project" value="UniProtKB-UniRule"/>
</dbReference>
<dbReference type="GO" id="GO:0032784">
    <property type="term" value="P:regulation of DNA-templated transcription elongation"/>
    <property type="evidence" value="ECO:0007669"/>
    <property type="project" value="InterPro"/>
</dbReference>
<dbReference type="GO" id="GO:0031564">
    <property type="term" value="P:transcription antitermination"/>
    <property type="evidence" value="ECO:0007669"/>
    <property type="project" value="UniProtKB-UniRule"/>
</dbReference>
<dbReference type="GO" id="GO:0140673">
    <property type="term" value="P:transcription elongation-coupled chromatin remodeling"/>
    <property type="evidence" value="ECO:0007669"/>
    <property type="project" value="InterPro"/>
</dbReference>
<dbReference type="CDD" id="cd06091">
    <property type="entry name" value="KOW_NusG"/>
    <property type="match status" value="1"/>
</dbReference>
<dbReference type="CDD" id="cd09891">
    <property type="entry name" value="NGN_Bact_1"/>
    <property type="match status" value="1"/>
</dbReference>
<dbReference type="FunFam" id="2.30.30.30:FF:000002">
    <property type="entry name" value="Transcription termination/antitermination factor NusG"/>
    <property type="match status" value="1"/>
</dbReference>
<dbReference type="FunFam" id="3.30.70.940:FF:000001">
    <property type="entry name" value="Transcription termination/antitermination protein NusG"/>
    <property type="match status" value="1"/>
</dbReference>
<dbReference type="Gene3D" id="2.30.30.30">
    <property type="match status" value="1"/>
</dbReference>
<dbReference type="Gene3D" id="3.30.70.940">
    <property type="entry name" value="NusG, N-terminal domain"/>
    <property type="match status" value="1"/>
</dbReference>
<dbReference type="HAMAP" id="MF_00948">
    <property type="entry name" value="NusG"/>
    <property type="match status" value="1"/>
</dbReference>
<dbReference type="InterPro" id="IPR005824">
    <property type="entry name" value="KOW"/>
</dbReference>
<dbReference type="InterPro" id="IPR047050">
    <property type="entry name" value="NGN"/>
</dbReference>
<dbReference type="InterPro" id="IPR006645">
    <property type="entry name" value="NGN-like_dom"/>
</dbReference>
<dbReference type="InterPro" id="IPR036735">
    <property type="entry name" value="NGN_dom_sf"/>
</dbReference>
<dbReference type="InterPro" id="IPR043425">
    <property type="entry name" value="NusG-like"/>
</dbReference>
<dbReference type="InterPro" id="IPR014722">
    <property type="entry name" value="Rib_uL2_dom2"/>
</dbReference>
<dbReference type="InterPro" id="IPR001062">
    <property type="entry name" value="Transcrpt_antiterm_NusG"/>
</dbReference>
<dbReference type="InterPro" id="IPR015869">
    <property type="entry name" value="Transcrpt_antiterm_NusG_bac_CS"/>
</dbReference>
<dbReference type="InterPro" id="IPR008991">
    <property type="entry name" value="Translation_prot_SH3-like_sf"/>
</dbReference>
<dbReference type="NCBIfam" id="TIGR00922">
    <property type="entry name" value="nusG"/>
    <property type="match status" value="1"/>
</dbReference>
<dbReference type="PANTHER" id="PTHR30265">
    <property type="entry name" value="RHO-INTERACTING TRANSCRIPTION TERMINATION FACTOR NUSG"/>
    <property type="match status" value="1"/>
</dbReference>
<dbReference type="PANTHER" id="PTHR30265:SF2">
    <property type="entry name" value="TRANSCRIPTION TERMINATION_ANTITERMINATION PROTEIN NUSG"/>
    <property type="match status" value="1"/>
</dbReference>
<dbReference type="Pfam" id="PF00467">
    <property type="entry name" value="KOW"/>
    <property type="match status" value="1"/>
</dbReference>
<dbReference type="Pfam" id="PF02357">
    <property type="entry name" value="NusG"/>
    <property type="match status" value="1"/>
</dbReference>
<dbReference type="PRINTS" id="PR00338">
    <property type="entry name" value="NUSGTNSCPFCT"/>
</dbReference>
<dbReference type="SMART" id="SM00739">
    <property type="entry name" value="KOW"/>
    <property type="match status" value="1"/>
</dbReference>
<dbReference type="SMART" id="SM00738">
    <property type="entry name" value="NGN"/>
    <property type="match status" value="1"/>
</dbReference>
<dbReference type="SUPFAM" id="SSF82679">
    <property type="entry name" value="N-utilization substance G protein NusG, N-terminal domain"/>
    <property type="match status" value="1"/>
</dbReference>
<dbReference type="SUPFAM" id="SSF50104">
    <property type="entry name" value="Translation proteins SH3-like domain"/>
    <property type="match status" value="1"/>
</dbReference>
<dbReference type="PROSITE" id="PS01014">
    <property type="entry name" value="NUSG"/>
    <property type="match status" value="1"/>
</dbReference>
<organism>
    <name type="scientific">Vibrio cholerae serotype O1 (strain ATCC 39315 / El Tor Inaba N16961)</name>
    <dbReference type="NCBI Taxonomy" id="243277"/>
    <lineage>
        <taxon>Bacteria</taxon>
        <taxon>Pseudomonadati</taxon>
        <taxon>Pseudomonadota</taxon>
        <taxon>Gammaproteobacteria</taxon>
        <taxon>Vibrionales</taxon>
        <taxon>Vibrionaceae</taxon>
        <taxon>Vibrio</taxon>
    </lineage>
</organism>
<sequence>MSEAPKKRWYVVQAFSGFEGRVAQSLREHIKMHGMEELFGEVLVPTEEVVEMRAGQRRKSERKFFPGYVLVQMIMNDESWHLVRSVPRVMGFIGGTSDRPAPITDKEADAILNRLEKASEAPRPKTMFEAGEVVRVNDGPFADFNGTVEEVDYEKSRLKVSVSIFGRATPVELEFGQVEKLD</sequence>
<protein>
    <recommendedName>
        <fullName evidence="2">Transcription termination/antitermination protein NusG</fullName>
    </recommendedName>
</protein>
<feature type="initiator methionine" description="Removed" evidence="1">
    <location>
        <position position="1"/>
    </location>
</feature>
<feature type="chain" id="PRO_0000113968" description="Transcription termination/antitermination protein NusG">
    <location>
        <begin position="2"/>
        <end position="182"/>
    </location>
</feature>
<feature type="domain" description="KOW" evidence="2">
    <location>
        <begin position="131"/>
        <end position="161"/>
    </location>
</feature>
<gene>
    <name evidence="2" type="primary">nusG</name>
    <name type="ordered locus">VC_0323</name>
</gene>
<reference key="1">
    <citation type="journal article" date="2000" name="Nature">
        <title>DNA sequence of both chromosomes of the cholera pathogen Vibrio cholerae.</title>
        <authorList>
            <person name="Heidelberg J.F."/>
            <person name="Eisen J.A."/>
            <person name="Nelson W.C."/>
            <person name="Clayton R.A."/>
            <person name="Gwinn M.L."/>
            <person name="Dodson R.J."/>
            <person name="Haft D.H."/>
            <person name="Hickey E.K."/>
            <person name="Peterson J.D."/>
            <person name="Umayam L.A."/>
            <person name="Gill S.R."/>
            <person name="Nelson K.E."/>
            <person name="Read T.D."/>
            <person name="Tettelin H."/>
            <person name="Richardson D.L."/>
            <person name="Ermolaeva M.D."/>
            <person name="Vamathevan J.J."/>
            <person name="Bass S."/>
            <person name="Qin H."/>
            <person name="Dragoi I."/>
            <person name="Sellers P."/>
            <person name="McDonald L.A."/>
            <person name="Utterback T.R."/>
            <person name="Fleischmann R.D."/>
            <person name="Nierman W.C."/>
            <person name="White O."/>
            <person name="Salzberg S.L."/>
            <person name="Smith H.O."/>
            <person name="Colwell R.R."/>
            <person name="Mekalanos J.J."/>
            <person name="Venter J.C."/>
            <person name="Fraser C.M."/>
        </authorList>
    </citation>
    <scope>NUCLEOTIDE SEQUENCE [LARGE SCALE GENOMIC DNA]</scope>
    <source>
        <strain>ATCC 39315 / El Tor Inaba N16961</strain>
    </source>
</reference>
<proteinExistence type="inferred from homology"/>
<keyword id="KW-1185">Reference proteome</keyword>
<keyword id="KW-0804">Transcription</keyword>
<keyword id="KW-0889">Transcription antitermination</keyword>
<keyword id="KW-0805">Transcription regulation</keyword>
<keyword id="KW-0806">Transcription termination</keyword>
<comment type="function">
    <text evidence="2">Participates in transcription elongation, termination and antitermination.</text>
</comment>
<comment type="similarity">
    <text evidence="2">Belongs to the NusG family.</text>
</comment>
<name>NUSG_VIBCH</name>
<evidence type="ECO:0000250" key="1"/>
<evidence type="ECO:0000255" key="2">
    <source>
        <dbReference type="HAMAP-Rule" id="MF_00948"/>
    </source>
</evidence>